<name>SCML1_PANTR</name>
<keyword id="KW-0539">Nucleus</keyword>
<keyword id="KW-0597">Phosphoprotein</keyword>
<keyword id="KW-1185">Reference proteome</keyword>
<keyword id="KW-0678">Repressor</keyword>
<keyword id="KW-0804">Transcription</keyword>
<keyword id="KW-0805">Transcription regulation</keyword>
<evidence type="ECO:0000250" key="1"/>
<evidence type="ECO:0000250" key="2">
    <source>
        <dbReference type="UniProtKB" id="Q9UN30"/>
    </source>
</evidence>
<evidence type="ECO:0000256" key="3">
    <source>
        <dbReference type="SAM" id="MobiDB-lite"/>
    </source>
</evidence>
<evidence type="ECO:0000305" key="4"/>
<accession>B0FZN7</accession>
<organism>
    <name type="scientific">Pan troglodytes</name>
    <name type="common">Chimpanzee</name>
    <dbReference type="NCBI Taxonomy" id="9598"/>
    <lineage>
        <taxon>Eukaryota</taxon>
        <taxon>Metazoa</taxon>
        <taxon>Chordata</taxon>
        <taxon>Craniata</taxon>
        <taxon>Vertebrata</taxon>
        <taxon>Euteleostomi</taxon>
        <taxon>Mammalia</taxon>
        <taxon>Eutheria</taxon>
        <taxon>Euarchontoglires</taxon>
        <taxon>Primates</taxon>
        <taxon>Haplorrhini</taxon>
        <taxon>Catarrhini</taxon>
        <taxon>Hominidae</taxon>
        <taxon>Pan</taxon>
    </lineage>
</organism>
<proteinExistence type="inferred from homology"/>
<dbReference type="EMBL" id="EU370781">
    <property type="protein sequence ID" value="ABY68576.1"/>
    <property type="molecule type" value="Genomic_DNA"/>
</dbReference>
<dbReference type="RefSeq" id="NP_001107636.1">
    <property type="nucleotide sequence ID" value="NM_001114164.1"/>
</dbReference>
<dbReference type="SMR" id="B0FZN7"/>
<dbReference type="FunCoup" id="B0FZN7">
    <property type="interactions" value="203"/>
</dbReference>
<dbReference type="STRING" id="9598.ENSPTRP00000047484"/>
<dbReference type="PaxDb" id="9598-ENSPTRP00000047484"/>
<dbReference type="GeneID" id="465521"/>
<dbReference type="KEGG" id="ptr:465521"/>
<dbReference type="CTD" id="6322"/>
<dbReference type="eggNOG" id="KOG3766">
    <property type="taxonomic scope" value="Eukaryota"/>
</dbReference>
<dbReference type="InParanoid" id="B0FZN7"/>
<dbReference type="Proteomes" id="UP000002277">
    <property type="component" value="Unplaced"/>
</dbReference>
<dbReference type="GO" id="GO:0005634">
    <property type="term" value="C:nucleus"/>
    <property type="evidence" value="ECO:0000318"/>
    <property type="project" value="GO_Central"/>
</dbReference>
<dbReference type="GO" id="GO:0003682">
    <property type="term" value="F:chromatin binding"/>
    <property type="evidence" value="ECO:0000318"/>
    <property type="project" value="GO_Central"/>
</dbReference>
<dbReference type="GO" id="GO:0042393">
    <property type="term" value="F:histone binding"/>
    <property type="evidence" value="ECO:0000318"/>
    <property type="project" value="GO_Central"/>
</dbReference>
<dbReference type="GO" id="GO:0045892">
    <property type="term" value="P:negative regulation of DNA-templated transcription"/>
    <property type="evidence" value="ECO:0000318"/>
    <property type="project" value="GO_Central"/>
</dbReference>
<dbReference type="CDD" id="cd09578">
    <property type="entry name" value="SAM_Scm"/>
    <property type="match status" value="1"/>
</dbReference>
<dbReference type="Gene3D" id="1.10.150.50">
    <property type="entry name" value="Transcription Factor, Ets-1"/>
    <property type="match status" value="1"/>
</dbReference>
<dbReference type="InterPro" id="IPR001660">
    <property type="entry name" value="SAM"/>
</dbReference>
<dbReference type="InterPro" id="IPR013761">
    <property type="entry name" value="SAM/pointed_sf"/>
</dbReference>
<dbReference type="InterPro" id="IPR047531">
    <property type="entry name" value="SAM_Scm-like"/>
</dbReference>
<dbReference type="PANTHER" id="PTHR47305">
    <property type="entry name" value="BEN DOMAIN-CONTAINING PROTEIN 2"/>
    <property type="match status" value="1"/>
</dbReference>
<dbReference type="PANTHER" id="PTHR47305:SF2">
    <property type="entry name" value="SAM DOMAIN-CONTAINING PROTEIN"/>
    <property type="match status" value="1"/>
</dbReference>
<dbReference type="Pfam" id="PF00536">
    <property type="entry name" value="SAM_1"/>
    <property type="match status" value="1"/>
</dbReference>
<dbReference type="SMART" id="SM00454">
    <property type="entry name" value="SAM"/>
    <property type="match status" value="1"/>
</dbReference>
<dbReference type="SUPFAM" id="SSF47769">
    <property type="entry name" value="SAM/Pointed domain"/>
    <property type="match status" value="1"/>
</dbReference>
<protein>
    <recommendedName>
        <fullName>Sex comb on midleg-like protein 1</fullName>
    </recommendedName>
</protein>
<sequence length="329" mass="37352">MMSDSSSEIDVVKTRIPTYDEDDNTILYAYETKPEFVNKEPNIVSDASCNTEEQLRTVNDVLLHCQVIYDALQNLDKKTDVIRRKVSKIQRFYARSLWTNRKRSGYKKHSYRPVKKLKLQKMKKNEVYETFSYPQSYSPTLPVSRRENNSPSNLPRPPFCMEEYQRAEPEEDPILSRTPSPVHPSDFCEHNYQSYYASDGAMYGSSSGLCLGNPRADSIHNTYSTDHASAVSPSVTRSPVGNDGCIAEGNITKHPSTWSVEAVVLFLKQTDPVALCPLVDLFRSHEVDGKALLLLTSDVLLKHFGVKLGTAVKLCYYIDRLKQGKCFEN</sequence>
<gene>
    <name type="primary">SCML1</name>
</gene>
<feature type="chain" id="PRO_0000380551" description="Sex comb on midleg-like protein 1">
    <location>
        <begin position="1"/>
        <end position="329"/>
    </location>
</feature>
<feature type="domain" description="SAM">
    <location>
        <begin position="258"/>
        <end position="325"/>
    </location>
</feature>
<feature type="region of interest" description="Disordered" evidence="3">
    <location>
        <begin position="138"/>
        <end position="157"/>
    </location>
</feature>
<feature type="modified residue" description="Phosphoserine" evidence="2">
    <location>
        <position position="138"/>
    </location>
</feature>
<feature type="modified residue" description="Phosphoserine" evidence="2">
    <location>
        <position position="238"/>
    </location>
</feature>
<reference key="1">
    <citation type="journal article" date="2008" name="BMC Evol. Biol.">
        <title>Adaptive evolution of SCML1 in primates, a gene involved in male reproduction.</title>
        <authorList>
            <person name="Wu H.-H."/>
            <person name="Su B."/>
        </authorList>
    </citation>
    <scope>NUCLEOTIDE SEQUENCE [GENOMIC DNA]</scope>
</reference>
<comment type="function">
    <text evidence="1">Putative Polycomb group (PcG) protein. PcG proteins act by forming multiprotein complexes, which are required to maintain the transcriptionally repressive state of homeotic genes throughout development. May be involved in spermatogenesis during sexual maturation (By similarity).</text>
</comment>
<comment type="subcellular location">
    <subcellularLocation>
        <location evidence="4">Nucleus</location>
    </subcellularLocation>
</comment>
<comment type="similarity">
    <text evidence="4">Belongs to the SCM family.</text>
</comment>